<comment type="function">
    <text evidence="1">An essential GTPase which binds GTP, GDP and possibly (p)ppGpp with moderate affinity, with high nucleotide exchange rates and a fairly low GTP hydrolysis rate. Plays a role in control of the cell cycle, stress response, ribosome biogenesis and in those bacteria that undergo differentiation, in morphogenesis control.</text>
</comment>
<comment type="cofactor">
    <cofactor evidence="1">
        <name>Mg(2+)</name>
        <dbReference type="ChEBI" id="CHEBI:18420"/>
    </cofactor>
</comment>
<comment type="subunit">
    <text evidence="1">Monomer.</text>
</comment>
<comment type="subcellular location">
    <subcellularLocation>
        <location evidence="1">Cytoplasm</location>
    </subcellularLocation>
</comment>
<comment type="similarity">
    <text evidence="1">Belongs to the TRAFAC class OBG-HflX-like GTPase superfamily. OBG GTPase family.</text>
</comment>
<protein>
    <recommendedName>
        <fullName evidence="1">GTPase Obg</fullName>
        <ecNumber evidence="1">3.6.5.-</ecNumber>
    </recommendedName>
    <alternativeName>
        <fullName evidence="1">GTP-binding protein Obg</fullName>
    </alternativeName>
</protein>
<proteinExistence type="inferred from homology"/>
<keyword id="KW-0067">ATP-binding</keyword>
<keyword id="KW-0963">Cytoplasm</keyword>
<keyword id="KW-0342">GTP-binding</keyword>
<keyword id="KW-0378">Hydrolase</keyword>
<keyword id="KW-0460">Magnesium</keyword>
<keyword id="KW-0479">Metal-binding</keyword>
<keyword id="KW-0547">Nucleotide-binding</keyword>
<keyword id="KW-1185">Reference proteome</keyword>
<evidence type="ECO:0000255" key="1">
    <source>
        <dbReference type="HAMAP-Rule" id="MF_01454"/>
    </source>
</evidence>
<evidence type="ECO:0000255" key="2">
    <source>
        <dbReference type="PROSITE-ProRule" id="PRU01231"/>
    </source>
</evidence>
<gene>
    <name evidence="1" type="primary">obg</name>
    <name type="ordered locus">P9211_02391</name>
</gene>
<dbReference type="EC" id="3.6.5.-" evidence="1"/>
<dbReference type="EMBL" id="CP000878">
    <property type="protein sequence ID" value="ABX08170.1"/>
    <property type="molecule type" value="Genomic_DNA"/>
</dbReference>
<dbReference type="RefSeq" id="WP_012194795.1">
    <property type="nucleotide sequence ID" value="NC_009976.1"/>
</dbReference>
<dbReference type="SMR" id="A9BDI4"/>
<dbReference type="STRING" id="93059.P9211_02391"/>
<dbReference type="KEGG" id="pmj:P9211_02391"/>
<dbReference type="eggNOG" id="COG0536">
    <property type="taxonomic scope" value="Bacteria"/>
</dbReference>
<dbReference type="HOGENOM" id="CLU_011747_2_3_3"/>
<dbReference type="OrthoDB" id="9807318at2"/>
<dbReference type="Proteomes" id="UP000000788">
    <property type="component" value="Chromosome"/>
</dbReference>
<dbReference type="GO" id="GO:0005737">
    <property type="term" value="C:cytoplasm"/>
    <property type="evidence" value="ECO:0007669"/>
    <property type="project" value="UniProtKB-SubCell"/>
</dbReference>
<dbReference type="GO" id="GO:0005524">
    <property type="term" value="F:ATP binding"/>
    <property type="evidence" value="ECO:0007669"/>
    <property type="project" value="UniProtKB-KW"/>
</dbReference>
<dbReference type="GO" id="GO:0005525">
    <property type="term" value="F:GTP binding"/>
    <property type="evidence" value="ECO:0007669"/>
    <property type="project" value="UniProtKB-UniRule"/>
</dbReference>
<dbReference type="GO" id="GO:0003924">
    <property type="term" value="F:GTPase activity"/>
    <property type="evidence" value="ECO:0007669"/>
    <property type="project" value="UniProtKB-UniRule"/>
</dbReference>
<dbReference type="GO" id="GO:0000287">
    <property type="term" value="F:magnesium ion binding"/>
    <property type="evidence" value="ECO:0007669"/>
    <property type="project" value="InterPro"/>
</dbReference>
<dbReference type="GO" id="GO:0042254">
    <property type="term" value="P:ribosome biogenesis"/>
    <property type="evidence" value="ECO:0007669"/>
    <property type="project" value="UniProtKB-UniRule"/>
</dbReference>
<dbReference type="CDD" id="cd01898">
    <property type="entry name" value="Obg"/>
    <property type="match status" value="1"/>
</dbReference>
<dbReference type="FunFam" id="2.70.210.12:FF:000001">
    <property type="entry name" value="GTPase Obg"/>
    <property type="match status" value="1"/>
</dbReference>
<dbReference type="Gene3D" id="2.70.210.12">
    <property type="entry name" value="GTP1/OBG domain"/>
    <property type="match status" value="1"/>
</dbReference>
<dbReference type="Gene3D" id="3.40.50.300">
    <property type="entry name" value="P-loop containing nucleotide triphosphate hydrolases"/>
    <property type="match status" value="1"/>
</dbReference>
<dbReference type="HAMAP" id="MF_01454">
    <property type="entry name" value="GTPase_Obg"/>
    <property type="match status" value="1"/>
</dbReference>
<dbReference type="InterPro" id="IPR031167">
    <property type="entry name" value="G_OBG"/>
</dbReference>
<dbReference type="InterPro" id="IPR006073">
    <property type="entry name" value="GTP-bd"/>
</dbReference>
<dbReference type="InterPro" id="IPR014100">
    <property type="entry name" value="GTP-bd_Obg/CgtA"/>
</dbReference>
<dbReference type="InterPro" id="IPR006074">
    <property type="entry name" value="GTP1-OBG_CS"/>
</dbReference>
<dbReference type="InterPro" id="IPR006169">
    <property type="entry name" value="GTP1_OBG_dom"/>
</dbReference>
<dbReference type="InterPro" id="IPR036726">
    <property type="entry name" value="GTP1_OBG_dom_sf"/>
</dbReference>
<dbReference type="InterPro" id="IPR045086">
    <property type="entry name" value="OBG_GTPase"/>
</dbReference>
<dbReference type="InterPro" id="IPR027417">
    <property type="entry name" value="P-loop_NTPase"/>
</dbReference>
<dbReference type="NCBIfam" id="TIGR02729">
    <property type="entry name" value="Obg_CgtA"/>
    <property type="match status" value="1"/>
</dbReference>
<dbReference type="NCBIfam" id="NF008955">
    <property type="entry name" value="PRK12297.1"/>
    <property type="match status" value="1"/>
</dbReference>
<dbReference type="NCBIfam" id="NF008956">
    <property type="entry name" value="PRK12299.1"/>
    <property type="match status" value="1"/>
</dbReference>
<dbReference type="PANTHER" id="PTHR11702">
    <property type="entry name" value="DEVELOPMENTALLY REGULATED GTP-BINDING PROTEIN-RELATED"/>
    <property type="match status" value="1"/>
</dbReference>
<dbReference type="PANTHER" id="PTHR11702:SF31">
    <property type="entry name" value="MITOCHONDRIAL RIBOSOME-ASSOCIATED GTPASE 2"/>
    <property type="match status" value="1"/>
</dbReference>
<dbReference type="Pfam" id="PF01018">
    <property type="entry name" value="GTP1_OBG"/>
    <property type="match status" value="1"/>
</dbReference>
<dbReference type="Pfam" id="PF01926">
    <property type="entry name" value="MMR_HSR1"/>
    <property type="match status" value="1"/>
</dbReference>
<dbReference type="PIRSF" id="PIRSF002401">
    <property type="entry name" value="GTP_bd_Obg/CgtA"/>
    <property type="match status" value="1"/>
</dbReference>
<dbReference type="PRINTS" id="PR00326">
    <property type="entry name" value="GTP1OBG"/>
</dbReference>
<dbReference type="SUPFAM" id="SSF82051">
    <property type="entry name" value="Obg GTP-binding protein N-terminal domain"/>
    <property type="match status" value="1"/>
</dbReference>
<dbReference type="SUPFAM" id="SSF52540">
    <property type="entry name" value="P-loop containing nucleoside triphosphate hydrolases"/>
    <property type="match status" value="1"/>
</dbReference>
<dbReference type="PROSITE" id="PS51710">
    <property type="entry name" value="G_OBG"/>
    <property type="match status" value="1"/>
</dbReference>
<dbReference type="PROSITE" id="PS00905">
    <property type="entry name" value="GTP1_OBG"/>
    <property type="match status" value="1"/>
</dbReference>
<dbReference type="PROSITE" id="PS51883">
    <property type="entry name" value="OBG"/>
    <property type="match status" value="1"/>
</dbReference>
<sequence>MQFIDQACISVKAGRGGDGIVAFRREKYVPAGGPSGGDGGKGGEIVLQADSNLQTLLDFKFKKFIVAQDGRRGGPNKCSGASGKDLVLKVPCGTQVRHQTTGIILGDLKHHGEILVVAYGGKGGLGNAHYLSNSNRAPEKCTEGKEGEQWLLHLELKLLAEVGIIGLPNAGKSTLMSVVSSARPKIADYPFTTLIPNLGVVRKPTGDGTVFADIPGLIEGAAAGVGLGHEFLRHIERTRLLIHLVDAAAARPIEDIAIIEKELFAYGHSLMNRPRVLVFNKKELLNEQCLQKLQAEARAFTNRDIIFISAATSEGLDELLKNVWEKLEI</sequence>
<reference key="1">
    <citation type="journal article" date="2007" name="PLoS Genet.">
        <title>Patterns and implications of gene gain and loss in the evolution of Prochlorococcus.</title>
        <authorList>
            <person name="Kettler G.C."/>
            <person name="Martiny A.C."/>
            <person name="Huang K."/>
            <person name="Zucker J."/>
            <person name="Coleman M.L."/>
            <person name="Rodrigue S."/>
            <person name="Chen F."/>
            <person name="Lapidus A."/>
            <person name="Ferriera S."/>
            <person name="Johnson J."/>
            <person name="Steglich C."/>
            <person name="Church G.M."/>
            <person name="Richardson P."/>
            <person name="Chisholm S.W."/>
        </authorList>
    </citation>
    <scope>NUCLEOTIDE SEQUENCE [LARGE SCALE GENOMIC DNA]</scope>
    <source>
        <strain>MIT 9211</strain>
    </source>
</reference>
<organism>
    <name type="scientific">Prochlorococcus marinus (strain MIT 9211)</name>
    <dbReference type="NCBI Taxonomy" id="93059"/>
    <lineage>
        <taxon>Bacteria</taxon>
        <taxon>Bacillati</taxon>
        <taxon>Cyanobacteriota</taxon>
        <taxon>Cyanophyceae</taxon>
        <taxon>Synechococcales</taxon>
        <taxon>Prochlorococcaceae</taxon>
        <taxon>Prochlorococcus</taxon>
    </lineage>
</organism>
<name>OBG_PROM4</name>
<feature type="chain" id="PRO_0000386133" description="GTPase Obg">
    <location>
        <begin position="1"/>
        <end position="329"/>
    </location>
</feature>
<feature type="domain" description="Obg" evidence="2">
    <location>
        <begin position="1"/>
        <end position="159"/>
    </location>
</feature>
<feature type="domain" description="OBG-type G" evidence="1">
    <location>
        <begin position="160"/>
        <end position="328"/>
    </location>
</feature>
<feature type="binding site" evidence="1">
    <location>
        <begin position="166"/>
        <end position="173"/>
    </location>
    <ligand>
        <name>ATP</name>
        <dbReference type="ChEBI" id="CHEBI:30616"/>
    </ligand>
</feature>
<feature type="binding site" evidence="1">
    <location>
        <position position="173"/>
    </location>
    <ligand>
        <name>Mg(2+)</name>
        <dbReference type="ChEBI" id="CHEBI:18420"/>
    </ligand>
</feature>
<feature type="binding site" evidence="1">
    <location>
        <begin position="191"/>
        <end position="195"/>
    </location>
    <ligand>
        <name>ATP</name>
        <dbReference type="ChEBI" id="CHEBI:30616"/>
    </ligand>
</feature>
<feature type="binding site" evidence="1">
    <location>
        <position position="193"/>
    </location>
    <ligand>
        <name>Mg(2+)</name>
        <dbReference type="ChEBI" id="CHEBI:18420"/>
    </ligand>
</feature>
<feature type="binding site" evidence="1">
    <location>
        <begin position="213"/>
        <end position="216"/>
    </location>
    <ligand>
        <name>ATP</name>
        <dbReference type="ChEBI" id="CHEBI:30616"/>
    </ligand>
</feature>
<feature type="binding site" evidence="1">
    <location>
        <begin position="280"/>
        <end position="283"/>
    </location>
    <ligand>
        <name>ATP</name>
        <dbReference type="ChEBI" id="CHEBI:30616"/>
    </ligand>
</feature>
<feature type="binding site" evidence="1">
    <location>
        <begin position="309"/>
        <end position="311"/>
    </location>
    <ligand>
        <name>ATP</name>
        <dbReference type="ChEBI" id="CHEBI:30616"/>
    </ligand>
</feature>
<accession>A9BDI4</accession>